<name>RL29_STAMF</name>
<dbReference type="EMBL" id="CP000575">
    <property type="protein sequence ID" value="ABN70124.1"/>
    <property type="molecule type" value="Genomic_DNA"/>
</dbReference>
<dbReference type="RefSeq" id="WP_011839315.1">
    <property type="nucleotide sequence ID" value="NC_009033.1"/>
</dbReference>
<dbReference type="SMR" id="A3DNB4"/>
<dbReference type="STRING" id="399550.Smar_1026"/>
<dbReference type="GeneID" id="4906966"/>
<dbReference type="KEGG" id="smr:Smar_1026"/>
<dbReference type="eggNOG" id="arCOG00785">
    <property type="taxonomic scope" value="Archaea"/>
</dbReference>
<dbReference type="HOGENOM" id="CLU_158491_2_0_2"/>
<dbReference type="OrthoDB" id="11736at2157"/>
<dbReference type="Proteomes" id="UP000000254">
    <property type="component" value="Chromosome"/>
</dbReference>
<dbReference type="GO" id="GO:0022625">
    <property type="term" value="C:cytosolic large ribosomal subunit"/>
    <property type="evidence" value="ECO:0007669"/>
    <property type="project" value="TreeGrafter"/>
</dbReference>
<dbReference type="GO" id="GO:0003735">
    <property type="term" value="F:structural constituent of ribosome"/>
    <property type="evidence" value="ECO:0007669"/>
    <property type="project" value="InterPro"/>
</dbReference>
<dbReference type="GO" id="GO:0006412">
    <property type="term" value="P:translation"/>
    <property type="evidence" value="ECO:0007669"/>
    <property type="project" value="UniProtKB-UniRule"/>
</dbReference>
<dbReference type="CDD" id="cd00427">
    <property type="entry name" value="Ribosomal_L29_HIP"/>
    <property type="match status" value="1"/>
</dbReference>
<dbReference type="FunFam" id="1.10.287.310:FF:000001">
    <property type="entry name" value="50S ribosomal protein L29"/>
    <property type="match status" value="1"/>
</dbReference>
<dbReference type="Gene3D" id="1.10.287.310">
    <property type="match status" value="1"/>
</dbReference>
<dbReference type="HAMAP" id="MF_00374">
    <property type="entry name" value="Ribosomal_uL29"/>
    <property type="match status" value="1"/>
</dbReference>
<dbReference type="InterPro" id="IPR050063">
    <property type="entry name" value="Ribosomal_protein_uL29"/>
</dbReference>
<dbReference type="InterPro" id="IPR001854">
    <property type="entry name" value="Ribosomal_uL29"/>
</dbReference>
<dbReference type="InterPro" id="IPR018254">
    <property type="entry name" value="Ribosomal_uL29_CS"/>
</dbReference>
<dbReference type="InterPro" id="IPR036049">
    <property type="entry name" value="Ribosomal_uL29_sf"/>
</dbReference>
<dbReference type="NCBIfam" id="TIGR00012">
    <property type="entry name" value="L29"/>
    <property type="match status" value="1"/>
</dbReference>
<dbReference type="PANTHER" id="PTHR10916">
    <property type="entry name" value="60S RIBOSOMAL PROTEIN L35/50S RIBOSOMAL PROTEIN L29"/>
    <property type="match status" value="1"/>
</dbReference>
<dbReference type="PANTHER" id="PTHR10916:SF0">
    <property type="entry name" value="LARGE RIBOSOMAL SUBUNIT PROTEIN UL29C"/>
    <property type="match status" value="1"/>
</dbReference>
<dbReference type="Pfam" id="PF00831">
    <property type="entry name" value="Ribosomal_L29"/>
    <property type="match status" value="1"/>
</dbReference>
<dbReference type="SUPFAM" id="SSF46561">
    <property type="entry name" value="Ribosomal protein L29 (L29p)"/>
    <property type="match status" value="1"/>
</dbReference>
<dbReference type="PROSITE" id="PS00579">
    <property type="entry name" value="RIBOSOMAL_L29"/>
    <property type="match status" value="1"/>
</dbReference>
<sequence>MKPDEIRKMTKEERLRRLNELRLELIKLRMQARVGTLTNTARIRNIKRDIARILTIMREEELGISRK</sequence>
<comment type="similarity">
    <text evidence="1">Belongs to the universal ribosomal protein uL29 family.</text>
</comment>
<keyword id="KW-1185">Reference proteome</keyword>
<keyword id="KW-0687">Ribonucleoprotein</keyword>
<keyword id="KW-0689">Ribosomal protein</keyword>
<gene>
    <name evidence="1" type="primary">rpl29</name>
    <name type="ordered locus">Smar_1026</name>
</gene>
<accession>A3DNB4</accession>
<reference key="1">
    <citation type="journal article" date="2009" name="BMC Genomics">
        <title>The complete genome sequence of Staphylothermus marinus reveals differences in sulfur metabolism among heterotrophic Crenarchaeota.</title>
        <authorList>
            <person name="Anderson I.J."/>
            <person name="Dharmarajan L."/>
            <person name="Rodriguez J."/>
            <person name="Hooper S."/>
            <person name="Porat I."/>
            <person name="Ulrich L.E."/>
            <person name="Elkins J.G."/>
            <person name="Mavromatis K."/>
            <person name="Sun H."/>
            <person name="Land M."/>
            <person name="Lapidus A."/>
            <person name="Lucas S."/>
            <person name="Barry K."/>
            <person name="Huber H."/>
            <person name="Zhulin I.B."/>
            <person name="Whitman W.B."/>
            <person name="Mukhopadhyay B."/>
            <person name="Woese C."/>
            <person name="Bristow J."/>
            <person name="Kyrpides N."/>
        </authorList>
    </citation>
    <scope>NUCLEOTIDE SEQUENCE [LARGE SCALE GENOMIC DNA]</scope>
    <source>
        <strain>ATCC 43588 / DSM 3639 / JCM 9404 / F1</strain>
    </source>
</reference>
<reference key="2">
    <citation type="journal article" date="2009" name="Stand. Genomic Sci.">
        <title>Complete genome sequence of Staphylothermus marinus Stetter and Fiala 1986 type strain F1.</title>
        <authorList>
            <person name="Anderson I.J."/>
            <person name="Sun H."/>
            <person name="Lapidus A."/>
            <person name="Copeland A."/>
            <person name="Glavina Del Rio T."/>
            <person name="Tice H."/>
            <person name="Dalin E."/>
            <person name="Lucas S."/>
            <person name="Barry K."/>
            <person name="Land M."/>
            <person name="Richardson P."/>
            <person name="Huber H."/>
            <person name="Kyrpides N.C."/>
        </authorList>
    </citation>
    <scope>NUCLEOTIDE SEQUENCE [LARGE SCALE GENOMIC DNA]</scope>
    <source>
        <strain>ATCC 43588 / DSM 3639 / JCM 9404 / F1</strain>
    </source>
</reference>
<proteinExistence type="inferred from homology"/>
<feature type="chain" id="PRO_1000007620" description="Large ribosomal subunit protein uL29">
    <location>
        <begin position="1"/>
        <end position="67"/>
    </location>
</feature>
<organism>
    <name type="scientific">Staphylothermus marinus (strain ATCC 43588 / DSM 3639 / JCM 9404 / F1)</name>
    <dbReference type="NCBI Taxonomy" id="399550"/>
    <lineage>
        <taxon>Archaea</taxon>
        <taxon>Thermoproteota</taxon>
        <taxon>Thermoprotei</taxon>
        <taxon>Desulfurococcales</taxon>
        <taxon>Desulfurococcaceae</taxon>
        <taxon>Staphylothermus</taxon>
    </lineage>
</organism>
<evidence type="ECO:0000255" key="1">
    <source>
        <dbReference type="HAMAP-Rule" id="MF_00374"/>
    </source>
</evidence>
<evidence type="ECO:0000305" key="2"/>
<protein>
    <recommendedName>
        <fullName evidence="1">Large ribosomal subunit protein uL29</fullName>
    </recommendedName>
    <alternativeName>
        <fullName evidence="2">50S ribosomal protein L29</fullName>
    </alternativeName>
</protein>